<sequence length="437" mass="47769">MADPKKLYIKTYGCQMNVYDSERMAEAMGGEGYVQTDRAEDADMILLNTCHIREKAAEKVYSELGRFKPLKAEKPDLKIGVAGCVAQAEGAEIMRRQPLVDLVVGPQAYHRLPELTARAATGAKALDTDFPEEDKFDHLAARPKAKRGPTAFLTVQEGCDKFCAFCVVPYTRGAEVSRPAARVLTEARDLVERGVREITLLGQNVNAYHGHARGLAGLIWDLAEIDGLERIRFTTSHPNDMDDALIAAHGACDKLMPYLHLPVQSGSDRILKAMNRKHTAESYIRLIERIRAARPDILLSGDFIVGFPGETDQDFADTMALVEAVGYGQAYSFKYSARPGTPAAEKEDVPGEVADARLQTLQALLTRQQRAIQDAKVGTTARVLFEKPGRLPGQMVGKSEHLHAVHVAAPDAARGDLVRVRIAESSANSLRGVLIAA</sequence>
<name>MIAB_DINSH</name>
<proteinExistence type="inferred from homology"/>
<reference key="1">
    <citation type="journal article" date="2010" name="ISME J.">
        <title>The complete genome sequence of the algal symbiont Dinoroseobacter shibae: a hitchhiker's guide to life in the sea.</title>
        <authorList>
            <person name="Wagner-Dobler I."/>
            <person name="Ballhausen B."/>
            <person name="Berger M."/>
            <person name="Brinkhoff T."/>
            <person name="Buchholz I."/>
            <person name="Bunk B."/>
            <person name="Cypionka H."/>
            <person name="Daniel R."/>
            <person name="Drepper T."/>
            <person name="Gerdts G."/>
            <person name="Hahnke S."/>
            <person name="Han C."/>
            <person name="Jahn D."/>
            <person name="Kalhoefer D."/>
            <person name="Kiss H."/>
            <person name="Klenk H.P."/>
            <person name="Kyrpides N."/>
            <person name="Liebl W."/>
            <person name="Liesegang H."/>
            <person name="Meincke L."/>
            <person name="Pati A."/>
            <person name="Petersen J."/>
            <person name="Piekarski T."/>
            <person name="Pommerenke C."/>
            <person name="Pradella S."/>
            <person name="Pukall R."/>
            <person name="Rabus R."/>
            <person name="Stackebrandt E."/>
            <person name="Thole S."/>
            <person name="Thompson L."/>
            <person name="Tielen P."/>
            <person name="Tomasch J."/>
            <person name="von Jan M."/>
            <person name="Wanphrut N."/>
            <person name="Wichels A."/>
            <person name="Zech H."/>
            <person name="Simon M."/>
        </authorList>
    </citation>
    <scope>NUCLEOTIDE SEQUENCE [LARGE SCALE GENOMIC DNA]</scope>
    <source>
        <strain>DSM 16493 / NCIMB 14021 / DFL 12</strain>
    </source>
</reference>
<keyword id="KW-0004">4Fe-4S</keyword>
<keyword id="KW-0963">Cytoplasm</keyword>
<keyword id="KW-0408">Iron</keyword>
<keyword id="KW-0411">Iron-sulfur</keyword>
<keyword id="KW-0479">Metal-binding</keyword>
<keyword id="KW-1185">Reference proteome</keyword>
<keyword id="KW-0949">S-adenosyl-L-methionine</keyword>
<keyword id="KW-0808">Transferase</keyword>
<keyword id="KW-0819">tRNA processing</keyword>
<evidence type="ECO:0000255" key="1">
    <source>
        <dbReference type="HAMAP-Rule" id="MF_01864"/>
    </source>
</evidence>
<evidence type="ECO:0000255" key="2">
    <source>
        <dbReference type="PROSITE-ProRule" id="PRU01266"/>
    </source>
</evidence>
<comment type="function">
    <text evidence="1">Catalyzes the methylthiolation of N6-(dimethylallyl)adenosine (i(6)A), leading to the formation of 2-methylthio-N6-(dimethylallyl)adenosine (ms(2)i(6)A) at position 37 in tRNAs that read codons beginning with uridine.</text>
</comment>
<comment type="catalytic activity">
    <reaction evidence="1">
        <text>N(6)-dimethylallyladenosine(37) in tRNA + (sulfur carrier)-SH + AH2 + 2 S-adenosyl-L-methionine = 2-methylsulfanyl-N(6)-dimethylallyladenosine(37) in tRNA + (sulfur carrier)-H + 5'-deoxyadenosine + L-methionine + A + S-adenosyl-L-homocysteine + 2 H(+)</text>
        <dbReference type="Rhea" id="RHEA:37067"/>
        <dbReference type="Rhea" id="RHEA-COMP:10375"/>
        <dbReference type="Rhea" id="RHEA-COMP:10376"/>
        <dbReference type="Rhea" id="RHEA-COMP:14737"/>
        <dbReference type="Rhea" id="RHEA-COMP:14739"/>
        <dbReference type="ChEBI" id="CHEBI:13193"/>
        <dbReference type="ChEBI" id="CHEBI:15378"/>
        <dbReference type="ChEBI" id="CHEBI:17319"/>
        <dbReference type="ChEBI" id="CHEBI:17499"/>
        <dbReference type="ChEBI" id="CHEBI:29917"/>
        <dbReference type="ChEBI" id="CHEBI:57844"/>
        <dbReference type="ChEBI" id="CHEBI:57856"/>
        <dbReference type="ChEBI" id="CHEBI:59789"/>
        <dbReference type="ChEBI" id="CHEBI:64428"/>
        <dbReference type="ChEBI" id="CHEBI:74415"/>
        <dbReference type="ChEBI" id="CHEBI:74417"/>
        <dbReference type="EC" id="2.8.4.3"/>
    </reaction>
</comment>
<comment type="cofactor">
    <cofactor evidence="1">
        <name>[4Fe-4S] cluster</name>
        <dbReference type="ChEBI" id="CHEBI:49883"/>
    </cofactor>
    <text evidence="1">Binds 2 [4Fe-4S] clusters. One cluster is coordinated with 3 cysteines and an exchangeable S-adenosyl-L-methionine.</text>
</comment>
<comment type="subunit">
    <text evidence="1">Monomer.</text>
</comment>
<comment type="subcellular location">
    <subcellularLocation>
        <location evidence="1">Cytoplasm</location>
    </subcellularLocation>
</comment>
<comment type="similarity">
    <text evidence="1">Belongs to the methylthiotransferase family. MiaB subfamily.</text>
</comment>
<accession>A8LSE7</accession>
<feature type="chain" id="PRO_0000374271" description="tRNA-2-methylthio-N(6)-dimethylallyladenosine synthase">
    <location>
        <begin position="1"/>
        <end position="437"/>
    </location>
</feature>
<feature type="domain" description="MTTase N-terminal" evidence="1">
    <location>
        <begin position="5"/>
        <end position="121"/>
    </location>
</feature>
<feature type="domain" description="Radical SAM core" evidence="2">
    <location>
        <begin position="145"/>
        <end position="371"/>
    </location>
</feature>
<feature type="domain" description="TRAM" evidence="1">
    <location>
        <begin position="374"/>
        <end position="436"/>
    </location>
</feature>
<feature type="binding site" evidence="1">
    <location>
        <position position="14"/>
    </location>
    <ligand>
        <name>[4Fe-4S] cluster</name>
        <dbReference type="ChEBI" id="CHEBI:49883"/>
        <label>1</label>
    </ligand>
</feature>
<feature type="binding site" evidence="1">
    <location>
        <position position="50"/>
    </location>
    <ligand>
        <name>[4Fe-4S] cluster</name>
        <dbReference type="ChEBI" id="CHEBI:49883"/>
        <label>1</label>
    </ligand>
</feature>
<feature type="binding site" evidence="1">
    <location>
        <position position="84"/>
    </location>
    <ligand>
        <name>[4Fe-4S] cluster</name>
        <dbReference type="ChEBI" id="CHEBI:49883"/>
        <label>1</label>
    </ligand>
</feature>
<feature type="binding site" evidence="1">
    <location>
        <position position="159"/>
    </location>
    <ligand>
        <name>[4Fe-4S] cluster</name>
        <dbReference type="ChEBI" id="CHEBI:49883"/>
        <label>2</label>
        <note>4Fe-4S-S-AdoMet</note>
    </ligand>
</feature>
<feature type="binding site" evidence="1">
    <location>
        <position position="163"/>
    </location>
    <ligand>
        <name>[4Fe-4S] cluster</name>
        <dbReference type="ChEBI" id="CHEBI:49883"/>
        <label>2</label>
        <note>4Fe-4S-S-AdoMet</note>
    </ligand>
</feature>
<feature type="binding site" evidence="1">
    <location>
        <position position="166"/>
    </location>
    <ligand>
        <name>[4Fe-4S] cluster</name>
        <dbReference type="ChEBI" id="CHEBI:49883"/>
        <label>2</label>
        <note>4Fe-4S-S-AdoMet</note>
    </ligand>
</feature>
<protein>
    <recommendedName>
        <fullName evidence="1">tRNA-2-methylthio-N(6)-dimethylallyladenosine synthase</fullName>
        <ecNumber evidence="1">2.8.4.3</ecNumber>
    </recommendedName>
    <alternativeName>
        <fullName evidence="1">(Dimethylallyl)adenosine tRNA methylthiotransferase MiaB</fullName>
    </alternativeName>
    <alternativeName>
        <fullName evidence="1">tRNA-i(6)A37 methylthiotransferase</fullName>
    </alternativeName>
</protein>
<gene>
    <name evidence="1" type="primary">miaB</name>
    <name type="ordered locus">Dshi_1019</name>
</gene>
<dbReference type="EC" id="2.8.4.3" evidence="1"/>
<dbReference type="EMBL" id="CP000830">
    <property type="protein sequence ID" value="ABV92761.1"/>
    <property type="molecule type" value="Genomic_DNA"/>
</dbReference>
<dbReference type="RefSeq" id="WP_012177692.1">
    <property type="nucleotide sequence ID" value="NC_009952.1"/>
</dbReference>
<dbReference type="SMR" id="A8LSE7"/>
<dbReference type="STRING" id="398580.Dshi_1019"/>
<dbReference type="KEGG" id="dsh:Dshi_1019"/>
<dbReference type="eggNOG" id="COG0621">
    <property type="taxonomic scope" value="Bacteria"/>
</dbReference>
<dbReference type="HOGENOM" id="CLU_018697_2_0_5"/>
<dbReference type="OrthoDB" id="9805215at2"/>
<dbReference type="Proteomes" id="UP000006833">
    <property type="component" value="Chromosome"/>
</dbReference>
<dbReference type="GO" id="GO:0005829">
    <property type="term" value="C:cytosol"/>
    <property type="evidence" value="ECO:0007669"/>
    <property type="project" value="TreeGrafter"/>
</dbReference>
<dbReference type="GO" id="GO:0051539">
    <property type="term" value="F:4 iron, 4 sulfur cluster binding"/>
    <property type="evidence" value="ECO:0007669"/>
    <property type="project" value="UniProtKB-UniRule"/>
</dbReference>
<dbReference type="GO" id="GO:0046872">
    <property type="term" value="F:metal ion binding"/>
    <property type="evidence" value="ECO:0007669"/>
    <property type="project" value="UniProtKB-KW"/>
</dbReference>
<dbReference type="GO" id="GO:0035597">
    <property type="term" value="F:N6-isopentenyladenosine methylthiotransferase activity"/>
    <property type="evidence" value="ECO:0007669"/>
    <property type="project" value="TreeGrafter"/>
</dbReference>
<dbReference type="CDD" id="cd01335">
    <property type="entry name" value="Radical_SAM"/>
    <property type="match status" value="1"/>
</dbReference>
<dbReference type="FunFam" id="3.40.50.12160:FF:000001">
    <property type="entry name" value="tRNA-2-methylthio-N(6)-dimethylallyladenosine synthase"/>
    <property type="match status" value="1"/>
</dbReference>
<dbReference type="FunFam" id="3.80.30.20:FF:000001">
    <property type="entry name" value="tRNA-2-methylthio-N(6)-dimethylallyladenosine synthase 2"/>
    <property type="match status" value="1"/>
</dbReference>
<dbReference type="Gene3D" id="3.40.50.12160">
    <property type="entry name" value="Methylthiotransferase, N-terminal domain"/>
    <property type="match status" value="1"/>
</dbReference>
<dbReference type="Gene3D" id="3.80.30.20">
    <property type="entry name" value="tm_1862 like domain"/>
    <property type="match status" value="1"/>
</dbReference>
<dbReference type="HAMAP" id="MF_01864">
    <property type="entry name" value="tRNA_metthiotr_MiaB"/>
    <property type="match status" value="1"/>
</dbReference>
<dbReference type="InterPro" id="IPR006638">
    <property type="entry name" value="Elp3/MiaA/NifB-like_rSAM"/>
</dbReference>
<dbReference type="InterPro" id="IPR005839">
    <property type="entry name" value="Methylthiotransferase"/>
</dbReference>
<dbReference type="InterPro" id="IPR020612">
    <property type="entry name" value="Methylthiotransferase_CS"/>
</dbReference>
<dbReference type="InterPro" id="IPR013848">
    <property type="entry name" value="Methylthiotransferase_N"/>
</dbReference>
<dbReference type="InterPro" id="IPR038135">
    <property type="entry name" value="Methylthiotransferase_N_sf"/>
</dbReference>
<dbReference type="InterPro" id="IPR006463">
    <property type="entry name" value="MiaB_methiolase"/>
</dbReference>
<dbReference type="InterPro" id="IPR007197">
    <property type="entry name" value="rSAM"/>
</dbReference>
<dbReference type="InterPro" id="IPR023404">
    <property type="entry name" value="rSAM_horseshoe"/>
</dbReference>
<dbReference type="InterPro" id="IPR002792">
    <property type="entry name" value="TRAM_dom"/>
</dbReference>
<dbReference type="NCBIfam" id="TIGR01574">
    <property type="entry name" value="miaB-methiolase"/>
    <property type="match status" value="1"/>
</dbReference>
<dbReference type="NCBIfam" id="TIGR00089">
    <property type="entry name" value="MiaB/RimO family radical SAM methylthiotransferase"/>
    <property type="match status" value="1"/>
</dbReference>
<dbReference type="PANTHER" id="PTHR43020">
    <property type="entry name" value="CDK5 REGULATORY SUBUNIT-ASSOCIATED PROTEIN 1"/>
    <property type="match status" value="1"/>
</dbReference>
<dbReference type="PANTHER" id="PTHR43020:SF2">
    <property type="entry name" value="MITOCHONDRIAL TRNA METHYLTHIOTRANSFERASE CDK5RAP1"/>
    <property type="match status" value="1"/>
</dbReference>
<dbReference type="Pfam" id="PF04055">
    <property type="entry name" value="Radical_SAM"/>
    <property type="match status" value="1"/>
</dbReference>
<dbReference type="Pfam" id="PF01938">
    <property type="entry name" value="TRAM"/>
    <property type="match status" value="1"/>
</dbReference>
<dbReference type="Pfam" id="PF00919">
    <property type="entry name" value="UPF0004"/>
    <property type="match status" value="1"/>
</dbReference>
<dbReference type="SFLD" id="SFLDF00273">
    <property type="entry name" value="(dimethylallyl)adenosine_tRNA"/>
    <property type="match status" value="1"/>
</dbReference>
<dbReference type="SFLD" id="SFLDG01082">
    <property type="entry name" value="B12-binding_domain_containing"/>
    <property type="match status" value="1"/>
</dbReference>
<dbReference type="SFLD" id="SFLDS00029">
    <property type="entry name" value="Radical_SAM"/>
    <property type="match status" value="1"/>
</dbReference>
<dbReference type="SMART" id="SM00729">
    <property type="entry name" value="Elp3"/>
    <property type="match status" value="1"/>
</dbReference>
<dbReference type="SUPFAM" id="SSF102114">
    <property type="entry name" value="Radical SAM enzymes"/>
    <property type="match status" value="1"/>
</dbReference>
<dbReference type="PROSITE" id="PS51449">
    <property type="entry name" value="MTTASE_N"/>
    <property type="match status" value="1"/>
</dbReference>
<dbReference type="PROSITE" id="PS01278">
    <property type="entry name" value="MTTASE_RADICAL"/>
    <property type="match status" value="1"/>
</dbReference>
<dbReference type="PROSITE" id="PS51918">
    <property type="entry name" value="RADICAL_SAM"/>
    <property type="match status" value="1"/>
</dbReference>
<dbReference type="PROSITE" id="PS50926">
    <property type="entry name" value="TRAM"/>
    <property type="match status" value="1"/>
</dbReference>
<organism>
    <name type="scientific">Dinoroseobacter shibae (strain DSM 16493 / NCIMB 14021 / DFL 12)</name>
    <dbReference type="NCBI Taxonomy" id="398580"/>
    <lineage>
        <taxon>Bacteria</taxon>
        <taxon>Pseudomonadati</taxon>
        <taxon>Pseudomonadota</taxon>
        <taxon>Alphaproteobacteria</taxon>
        <taxon>Rhodobacterales</taxon>
        <taxon>Roseobacteraceae</taxon>
        <taxon>Dinoroseobacter</taxon>
    </lineage>
</organism>